<organism>
    <name type="scientific">Felis catus</name>
    <name type="common">Cat</name>
    <name type="synonym">Felis silvestris catus</name>
    <dbReference type="NCBI Taxonomy" id="9685"/>
    <lineage>
        <taxon>Eukaryota</taxon>
        <taxon>Metazoa</taxon>
        <taxon>Chordata</taxon>
        <taxon>Craniata</taxon>
        <taxon>Vertebrata</taxon>
        <taxon>Euteleostomi</taxon>
        <taxon>Mammalia</taxon>
        <taxon>Eutheria</taxon>
        <taxon>Laurasiatheria</taxon>
        <taxon>Carnivora</taxon>
        <taxon>Feliformia</taxon>
        <taxon>Felidae</taxon>
        <taxon>Felinae</taxon>
        <taxon>Felis</taxon>
    </lineage>
</organism>
<comment type="function">
    <text>This inhibitor is composed of two homologous actively inhibiting halves: one which inhibits trypsin, the other which inhibits elastase.</text>
</comment>
<comment type="subcellular location">
    <subcellularLocation>
        <location>Secreted</location>
    </subcellularLocation>
</comment>
<reference key="1">
    <citation type="journal article" date="1987" name="Biol. Chem. Hoppe-Seyler">
        <title>The amino-acid sequences of the double-headed proteinase inhibitors from cat, lion and dog submandibular glands.</title>
        <authorList>
            <person name="Reisinger P.W.M."/>
            <person name="Hochstrasser K."/>
            <person name="Gottlicher I."/>
            <person name="Eulitz M."/>
            <person name="Wachter E."/>
        </authorList>
    </citation>
    <scope>PROTEIN SEQUENCE</scope>
    <source>
        <tissue>Submandibular gland</tissue>
    </source>
</reference>
<sequence>ASPPEVNCSQYNRKGSGITCSKEWKPICGIDHKTYSNECMFCQLNQNKRFQLRKLHDNKCQIECTNYSAICTMEYFPLCGSDGQEYSNKCLFCNEVVKRRGTLFLAKYGQC</sequence>
<keyword id="KW-0903">Direct protein sequencing</keyword>
<keyword id="KW-1015">Disulfide bond</keyword>
<keyword id="KW-0646">Protease inhibitor</keyword>
<keyword id="KW-1185">Reference proteome</keyword>
<keyword id="KW-0677">Repeat</keyword>
<keyword id="KW-0964">Secreted</keyword>
<keyword id="KW-0722">Serine protease inhibitor</keyword>
<accession>P08480</accession>
<proteinExistence type="evidence at protein level"/>
<evidence type="ECO:0000255" key="1">
    <source>
        <dbReference type="PROSITE-ProRule" id="PRU00798"/>
    </source>
</evidence>
<protein>
    <recommendedName>
        <fullName>Double-headed protease inhibitor, submandibular gland</fullName>
    </recommendedName>
</protein>
<feature type="chain" id="PRO_0000073036" description="Double-headed protease inhibitor, submandibular gland">
    <location>
        <begin position="1"/>
        <end position="111"/>
    </location>
</feature>
<feature type="domain" description="Kazal-like 1" evidence="1">
    <location>
        <begin position="2"/>
        <end position="62"/>
    </location>
</feature>
<feature type="domain" description="Kazal-like 2" evidence="1">
    <location>
        <begin position="63"/>
        <end position="111"/>
    </location>
</feature>
<feature type="site" description="Reactive bond 1 for trypsin">
    <location>
        <begin position="22"/>
        <end position="23"/>
    </location>
</feature>
<feature type="site" description="Reactive bond 2 for elastase">
    <location>
        <begin position="73"/>
        <end position="74"/>
    </location>
</feature>
<feature type="disulfide bond" evidence="1">
    <location>
        <begin position="8"/>
        <end position="42"/>
    </location>
</feature>
<feature type="disulfide bond" evidence="1">
    <location>
        <begin position="20"/>
        <end position="39"/>
    </location>
</feature>
<feature type="disulfide bond" evidence="1">
    <location>
        <begin position="28"/>
        <end position="60"/>
    </location>
</feature>
<feature type="disulfide bond" evidence="1">
    <location>
        <begin position="64"/>
        <end position="93"/>
    </location>
</feature>
<feature type="disulfide bond" evidence="1">
    <location>
        <begin position="71"/>
        <end position="90"/>
    </location>
</feature>
<feature type="disulfide bond" evidence="1">
    <location>
        <begin position="79"/>
        <end position="111"/>
    </location>
</feature>
<dbReference type="PIR" id="A29654">
    <property type="entry name" value="A29654"/>
</dbReference>
<dbReference type="SMR" id="P08480"/>
<dbReference type="STRING" id="9685.ENSFCAP00000019986"/>
<dbReference type="MEROPS" id="I01.016"/>
<dbReference type="MEROPS" id="I01.017"/>
<dbReference type="PaxDb" id="9685-ENSFCAP00000019986"/>
<dbReference type="Ensembl" id="ENSFCAT00000023759.4">
    <property type="protein sequence ID" value="ENSFCAP00000019986.3"/>
    <property type="gene ID" value="ENSFCAG00000030926.4"/>
</dbReference>
<dbReference type="eggNOG" id="KOG3649">
    <property type="taxonomic scope" value="Eukaryota"/>
</dbReference>
<dbReference type="GeneTree" id="ENSGT00520000060726"/>
<dbReference type="HOGENOM" id="CLU_087965_2_1_1"/>
<dbReference type="InParanoid" id="P08480"/>
<dbReference type="OMA" id="YSAICTM"/>
<dbReference type="Proteomes" id="UP000011712">
    <property type="component" value="Chromosome A1"/>
</dbReference>
<dbReference type="Bgee" id="ENSFCAG00000030926">
    <property type="expression patterns" value="Expressed in zone of skin and 2 other cell types or tissues"/>
</dbReference>
<dbReference type="GO" id="GO:0005576">
    <property type="term" value="C:extracellular region"/>
    <property type="evidence" value="ECO:0007669"/>
    <property type="project" value="UniProtKB-SubCell"/>
</dbReference>
<dbReference type="GO" id="GO:0004867">
    <property type="term" value="F:serine-type endopeptidase inhibitor activity"/>
    <property type="evidence" value="ECO:0007669"/>
    <property type="project" value="UniProtKB-KW"/>
</dbReference>
<dbReference type="CDD" id="cd00104">
    <property type="entry name" value="KAZAL_FS"/>
    <property type="match status" value="1"/>
</dbReference>
<dbReference type="FunFam" id="3.30.60.30:FF:000037">
    <property type="entry name" value="Ovomucoid"/>
    <property type="match status" value="1"/>
</dbReference>
<dbReference type="Gene3D" id="3.30.60.30">
    <property type="match status" value="2"/>
</dbReference>
<dbReference type="InterPro" id="IPR051597">
    <property type="entry name" value="Bifunctional_prot_inhibitor"/>
</dbReference>
<dbReference type="InterPro" id="IPR002350">
    <property type="entry name" value="Kazal_dom"/>
</dbReference>
<dbReference type="InterPro" id="IPR036058">
    <property type="entry name" value="Kazal_dom_sf"/>
</dbReference>
<dbReference type="InterPro" id="IPR001239">
    <property type="entry name" value="Prot_inh_Kazal-m"/>
</dbReference>
<dbReference type="PANTHER" id="PTHR47729:SF1">
    <property type="entry name" value="OVOMUCOID-LIKE-RELATED"/>
    <property type="match status" value="1"/>
</dbReference>
<dbReference type="PANTHER" id="PTHR47729">
    <property type="entry name" value="SERINE PEPTIDASE INHIBITOR, KAZAL TYPE 2, TANDEM DUPLICATE 1-RELATED"/>
    <property type="match status" value="1"/>
</dbReference>
<dbReference type="Pfam" id="PF00050">
    <property type="entry name" value="Kazal_1"/>
    <property type="match status" value="2"/>
</dbReference>
<dbReference type="PRINTS" id="PR00290">
    <property type="entry name" value="KAZALINHBTR"/>
</dbReference>
<dbReference type="SMART" id="SM00280">
    <property type="entry name" value="KAZAL"/>
    <property type="match status" value="2"/>
</dbReference>
<dbReference type="SUPFAM" id="SSF100895">
    <property type="entry name" value="Kazal-type serine protease inhibitors"/>
    <property type="match status" value="2"/>
</dbReference>
<dbReference type="PROSITE" id="PS00282">
    <property type="entry name" value="KAZAL_1"/>
    <property type="match status" value="2"/>
</dbReference>
<dbReference type="PROSITE" id="PS51465">
    <property type="entry name" value="KAZAL_2"/>
    <property type="match status" value="2"/>
</dbReference>
<name>IPSG_FELCA</name>